<reference key="1">
    <citation type="journal article" date="2002" name="BMC Genomics">
        <title>Cynomolgus monkey testicular cDNAs for discovery of novel human genes in the human genome sequence.</title>
        <authorList>
            <person name="Osada N."/>
            <person name="Hida M."/>
            <person name="Kusuda J."/>
            <person name="Tanuma R."/>
            <person name="Hirata M."/>
            <person name="Suto Y."/>
            <person name="Hirai M."/>
            <person name="Terao K."/>
            <person name="Sugano S."/>
            <person name="Hashimoto K."/>
        </authorList>
    </citation>
    <scope>NUCLEOTIDE SEQUENCE [LARGE SCALE MRNA]</scope>
    <source>
        <tissue>Testis</tissue>
    </source>
</reference>
<protein>
    <recommendedName>
        <fullName evidence="2">Protein CFAP20DC</fullName>
    </recommendedName>
</protein>
<gene>
    <name type="primary">CFAP20DC</name>
    <name type="ORF">QtsA-12457</name>
</gene>
<keyword id="KW-1185">Reference proteome</keyword>
<dbReference type="EMBL" id="AB070047">
    <property type="protein sequence ID" value="BAB62992.1"/>
    <property type="molecule type" value="mRNA"/>
</dbReference>
<dbReference type="SMR" id="Q95JY0"/>
<dbReference type="STRING" id="9541.ENSMFAP00000032837"/>
<dbReference type="eggNOG" id="KOG3213">
    <property type="taxonomic scope" value="Eukaryota"/>
</dbReference>
<dbReference type="Proteomes" id="UP000233100">
    <property type="component" value="Unplaced"/>
</dbReference>
<dbReference type="InterPro" id="IPR040441">
    <property type="entry name" value="CFA20/CFAP20DC"/>
</dbReference>
<dbReference type="InterPro" id="IPR007714">
    <property type="entry name" value="CFA20_dom"/>
</dbReference>
<dbReference type="PANTHER" id="PTHR12458">
    <property type="entry name" value="ORF PROTEIN"/>
    <property type="match status" value="1"/>
</dbReference>
<dbReference type="Pfam" id="PF05018">
    <property type="entry name" value="CFA20_dom"/>
    <property type="match status" value="1"/>
</dbReference>
<feature type="chain" id="PRO_0000317181" description="Protein CFAP20DC">
    <location>
        <begin position="1"/>
        <end position="689"/>
    </location>
</feature>
<feature type="region of interest" description="Disordered" evidence="1">
    <location>
        <begin position="143"/>
        <end position="179"/>
    </location>
</feature>
<feature type="region of interest" description="Disordered" evidence="1">
    <location>
        <begin position="217"/>
        <end position="236"/>
    </location>
</feature>
<feature type="region of interest" description="Disordered" evidence="1">
    <location>
        <begin position="241"/>
        <end position="262"/>
    </location>
</feature>
<feature type="region of interest" description="Disordered" evidence="1">
    <location>
        <begin position="333"/>
        <end position="424"/>
    </location>
</feature>
<feature type="region of interest" description="Disordered" evidence="1">
    <location>
        <begin position="583"/>
        <end position="660"/>
    </location>
</feature>
<feature type="compositionally biased region" description="Polar residues" evidence="1">
    <location>
        <begin position="150"/>
        <end position="176"/>
    </location>
</feature>
<feature type="compositionally biased region" description="Polar residues" evidence="1">
    <location>
        <begin position="343"/>
        <end position="359"/>
    </location>
</feature>
<feature type="compositionally biased region" description="Acidic residues" evidence="1">
    <location>
        <begin position="394"/>
        <end position="405"/>
    </location>
</feature>
<feature type="compositionally biased region" description="Polar residues" evidence="1">
    <location>
        <begin position="411"/>
        <end position="421"/>
    </location>
</feature>
<feature type="compositionally biased region" description="Low complexity" evidence="1">
    <location>
        <begin position="583"/>
        <end position="593"/>
    </location>
</feature>
<name>CF20D_MACFA</name>
<sequence>MIKRKIWCNLCIDLVAFTSEIFKGAVFQSLDGIVVSANCKLRKIFTLKSKPQDTADKDAVCGVPFSTDEPTDIIPRSCQLMTDVPHVTQLLNMTKLRQTEIKFGGHPLRSAESDQFINRGTGSTRNSKNQDVCHIAFGSKVLGPPPLSGRRSNMRISSETVRSVGSKNNRSCQPSTVEKHVNGTEMSALLIPESEEQGNKENIHHIKQTVPIHAANLPIMHPHPPQEPSADKNNNRRRLRLKSTSRERTETPSGNSSGNNTNEVKAATVLTTVSQQEAGLLNSSTLGPQSPDQSDEWIFPENADHVSYLASSRQSLLLDDDSCHPSHLWLEASKESEHDQQAEESQSVPKDIFTFSSRPRSAPHGKTQTMSPEEVSFILDLKEDNSVTSRDTQSEDDFYGGDSSEEGDHSIQGSRGPTTGPSELTQLTSESLLGEAAKRTSKEYLKSAYTEAGATESQDSSAEQIDRNNFQMSSLPTTCFSPTGRRCGSCQKTPDPVIKAKDLPAQQVPASLNKTSLKEISGERLSSIPEASEYDWRNYQPSQMSESELQMLASLRRQQNEELEDAGTSHGLSASQVDNCNVSISTSSDDTTTWNSCLPPPVNQGHHYQKEMNPPSPSNPRDWLNMLSPPIVPPSQQPAEQRPDSSESLSVQGEEDLSVEEDEEVLTLLYDPCLDCYFDPQTGKYYELV</sequence>
<organism>
    <name type="scientific">Macaca fascicularis</name>
    <name type="common">Crab-eating macaque</name>
    <name type="synonym">Cynomolgus monkey</name>
    <dbReference type="NCBI Taxonomy" id="9541"/>
    <lineage>
        <taxon>Eukaryota</taxon>
        <taxon>Metazoa</taxon>
        <taxon>Chordata</taxon>
        <taxon>Craniata</taxon>
        <taxon>Vertebrata</taxon>
        <taxon>Euteleostomi</taxon>
        <taxon>Mammalia</taxon>
        <taxon>Eutheria</taxon>
        <taxon>Euarchontoglires</taxon>
        <taxon>Primates</taxon>
        <taxon>Haplorrhini</taxon>
        <taxon>Catarrhini</taxon>
        <taxon>Cercopithecidae</taxon>
        <taxon>Cercopithecinae</taxon>
        <taxon>Macaca</taxon>
    </lineage>
</organism>
<accession>Q95JY0</accession>
<proteinExistence type="evidence at transcript level"/>
<evidence type="ECO:0000256" key="1">
    <source>
        <dbReference type="SAM" id="MobiDB-lite"/>
    </source>
</evidence>
<evidence type="ECO:0000305" key="2"/>